<keyword id="KW-0134">Cell wall</keyword>
<keyword id="KW-0961">Cell wall biogenesis/degradation</keyword>
<keyword id="KW-0472">Membrane</keyword>
<keyword id="KW-1185">Reference proteome</keyword>
<keyword id="KW-0964">Secreted</keyword>
<keyword id="KW-0732">Signal</keyword>
<reference key="1">
    <citation type="journal article" date="2002" name="Plant Physiol.">
        <title>Expression of alpha-expansin and expansin-like genes in deepwater rice.</title>
        <authorList>
            <person name="Lee Y."/>
            <person name="Kende H."/>
        </authorList>
    </citation>
    <scope>NUCLEOTIDE SEQUENCE [GENOMIC DNA]</scope>
    <scope>TISSUE SPECIFICITY</scope>
</reference>
<reference key="2">
    <citation type="journal article" date="2005" name="Genome Res.">
        <title>Sequence, annotation, and analysis of synteny between rice chromosome 3 and diverged grass species.</title>
        <authorList>
            <consortium name="The rice chromosome 3 sequencing consortium"/>
            <person name="Buell C.R."/>
            <person name="Yuan Q."/>
            <person name="Ouyang S."/>
            <person name="Liu J."/>
            <person name="Zhu W."/>
            <person name="Wang A."/>
            <person name="Maiti R."/>
            <person name="Haas B."/>
            <person name="Wortman J."/>
            <person name="Pertea M."/>
            <person name="Jones K.M."/>
            <person name="Kim M."/>
            <person name="Overton L."/>
            <person name="Tsitrin T."/>
            <person name="Fadrosh D."/>
            <person name="Bera J."/>
            <person name="Weaver B."/>
            <person name="Jin S."/>
            <person name="Johri S."/>
            <person name="Reardon M."/>
            <person name="Webb K."/>
            <person name="Hill J."/>
            <person name="Moffat K."/>
            <person name="Tallon L."/>
            <person name="Van Aken S."/>
            <person name="Lewis M."/>
            <person name="Utterback T."/>
            <person name="Feldblyum T."/>
            <person name="Zismann V."/>
            <person name="Iobst S."/>
            <person name="Hsiao J."/>
            <person name="de Vazeille A.R."/>
            <person name="Salzberg S.L."/>
            <person name="White O."/>
            <person name="Fraser C.M."/>
            <person name="Yu Y."/>
            <person name="Kim H."/>
            <person name="Rambo T."/>
            <person name="Currie J."/>
            <person name="Collura K."/>
            <person name="Kernodle-Thompson S."/>
            <person name="Wei F."/>
            <person name="Kudrna K."/>
            <person name="Ammiraju J.S.S."/>
            <person name="Luo M."/>
            <person name="Goicoechea J.L."/>
            <person name="Wing R.A."/>
            <person name="Henry D."/>
            <person name="Oates R."/>
            <person name="Palmer M."/>
            <person name="Pries G."/>
            <person name="Saski C."/>
            <person name="Simmons J."/>
            <person name="Soderlund C."/>
            <person name="Nelson W."/>
            <person name="de la Bastide M."/>
            <person name="Spiegel L."/>
            <person name="Nascimento L."/>
            <person name="Huang E."/>
            <person name="Preston R."/>
            <person name="Zutavern T."/>
            <person name="Palmer L."/>
            <person name="O'Shaughnessy A."/>
            <person name="Dike S."/>
            <person name="McCombie W.R."/>
            <person name="Minx P."/>
            <person name="Cordum H."/>
            <person name="Wilson R."/>
            <person name="Jin W."/>
            <person name="Lee H.R."/>
            <person name="Jiang J."/>
            <person name="Jackson S."/>
        </authorList>
    </citation>
    <scope>NUCLEOTIDE SEQUENCE [LARGE SCALE GENOMIC DNA]</scope>
    <source>
        <strain>cv. Nipponbare</strain>
    </source>
</reference>
<reference key="3">
    <citation type="journal article" date="2005" name="Nature">
        <title>The map-based sequence of the rice genome.</title>
        <authorList>
            <consortium name="International rice genome sequencing project (IRGSP)"/>
        </authorList>
    </citation>
    <scope>NUCLEOTIDE SEQUENCE [LARGE SCALE GENOMIC DNA]</scope>
    <source>
        <strain>cv. Nipponbare</strain>
    </source>
</reference>
<reference key="4">
    <citation type="journal article" date="2013" name="Rice">
        <title>Improvement of the Oryza sativa Nipponbare reference genome using next generation sequence and optical map data.</title>
        <authorList>
            <person name="Kawahara Y."/>
            <person name="de la Bastide M."/>
            <person name="Hamilton J.P."/>
            <person name="Kanamori H."/>
            <person name="McCombie W.R."/>
            <person name="Ouyang S."/>
            <person name="Schwartz D.C."/>
            <person name="Tanaka T."/>
            <person name="Wu J."/>
            <person name="Zhou S."/>
            <person name="Childs K.L."/>
            <person name="Davidson R.M."/>
            <person name="Lin H."/>
            <person name="Quesada-Ocampo L."/>
            <person name="Vaillancourt B."/>
            <person name="Sakai H."/>
            <person name="Lee S.S."/>
            <person name="Kim J."/>
            <person name="Numa H."/>
            <person name="Itoh T."/>
            <person name="Buell C.R."/>
            <person name="Matsumoto T."/>
        </authorList>
    </citation>
    <scope>GENOME REANNOTATION</scope>
    <source>
        <strain>cv. Nipponbare</strain>
    </source>
</reference>
<reference key="5">
    <citation type="journal article" date="2005" name="Mol. Cells">
        <title>Characterization and transcriptional expression of the alpha-expansin gene family in rice.</title>
        <authorList>
            <person name="Shin J.-H."/>
            <person name="Jeong D.-H."/>
            <person name="Park M.C."/>
            <person name="An G."/>
        </authorList>
    </citation>
    <scope>NUCLEOTIDE SEQUENCE [MRNA] OF 11-231</scope>
    <source>
        <strain>cv. Dongjin</strain>
    </source>
</reference>
<reference key="6">
    <citation type="journal article" date="2004" name="Plant Mol. Biol.">
        <title>Nomenclature for members of the expansin superfamily of genes and proteins.</title>
        <authorList>
            <person name="Kende H."/>
            <person name="Bradford K.J."/>
            <person name="Brummell D.A."/>
            <person name="Cho H.-T."/>
            <person name="Cosgrove D.J."/>
            <person name="Fleming A.J."/>
            <person name="Gehring C."/>
            <person name="Lee Y."/>
            <person name="McQueen-Mason S.J."/>
            <person name="Rose J.K.C."/>
            <person name="Voesenek L.A.C."/>
        </authorList>
    </citation>
    <scope>NOMENCLATURE</scope>
</reference>
<organism>
    <name type="scientific">Oryza sativa subsp. japonica</name>
    <name type="common">Rice</name>
    <dbReference type="NCBI Taxonomy" id="39947"/>
    <lineage>
        <taxon>Eukaryota</taxon>
        <taxon>Viridiplantae</taxon>
        <taxon>Streptophyta</taxon>
        <taxon>Embryophyta</taxon>
        <taxon>Tracheophyta</taxon>
        <taxon>Spermatophyta</taxon>
        <taxon>Magnoliopsida</taxon>
        <taxon>Liliopsida</taxon>
        <taxon>Poales</taxon>
        <taxon>Poaceae</taxon>
        <taxon>BOP clade</taxon>
        <taxon>Oryzoideae</taxon>
        <taxon>Oryzeae</taxon>
        <taxon>Oryzinae</taxon>
        <taxon>Oryza</taxon>
        <taxon>Oryza sativa</taxon>
    </lineage>
</organism>
<gene>
    <name type="primary">EXPA15</name>
    <name type="synonym">EXP15</name>
    <name type="ordered locus">Os03g0155700</name>
    <name type="ordered locus">Os03g0155600</name>
    <name type="ordered locus">LOC_Os03g06020</name>
    <name type="ORF">OSJNBa0011L14.16</name>
</gene>
<protein>
    <recommendedName>
        <fullName>Expansin-A15</fullName>
    </recommendedName>
    <alternativeName>
        <fullName>Alpha-expansin-15</fullName>
    </alternativeName>
    <alternativeName>
        <fullName>OsEXP15</fullName>
    </alternativeName>
    <alternativeName>
        <fullName>OsEXPA15</fullName>
    </alternativeName>
    <alternativeName>
        <fullName>OsaEXPa1.8</fullName>
    </alternativeName>
</protein>
<comment type="function">
    <text evidence="1">May cause loosening and extension of plant cell walls by disrupting non-covalent bonding between cellulose microfibrils and matrix glucans. No enzymatic activity has been found. May be required for rapid internodal elongation in deepwater rice during submergence (By similarity).</text>
</comment>
<comment type="subcellular location">
    <subcellularLocation>
        <location evidence="1">Secreted</location>
        <location evidence="1">Cell wall</location>
    </subcellularLocation>
    <subcellularLocation>
        <location evidence="1">Membrane</location>
        <topology evidence="1">Peripheral membrane protein</topology>
    </subcellularLocation>
</comment>
<comment type="tissue specificity">
    <text evidence="5">Expressed in roots.</text>
</comment>
<comment type="similarity">
    <text evidence="6">Belongs to the expansin family. Expansin A subfamily.</text>
</comment>
<comment type="sequence caution" evidence="6">
    <conflict type="erroneous initiation">
        <sequence resource="EMBL-CDS" id="AAM51842"/>
    </conflict>
</comment>
<comment type="sequence caution" evidence="6">
    <conflict type="erroneous initiation">
        <sequence resource="EMBL-CDS" id="ABF94053"/>
    </conflict>
</comment>
<comment type="online information" name="EXPANSIN homepage">
    <link uri="https://www.dept.psu.edu/biology/groups/expansins/index.htm"/>
</comment>
<name>EXP15_ORYSJ</name>
<sequence>MAMWKKKKTPSILPLVVVIAAASLIAPTTAGWSSGTATFYGGSDASGTMGGACGYGNLYWSGYGTNTAALSSALFNDGASCGQCYQIACDHQAEPRWCLQGRTVTITGTNLCPPNYALSSNDGGWCNPPRTHFDMAEPAWLQIGIYKAGIVPVLYQRVPCVKQGGVRFTMGGFNYFELVLISNVAGSGSIQSVWVKGPNTDRMPLSRNWGANWQSHAGLVGQTLTFGVTSTGGQTLVFQNIVPAWWKFGQSFSSNLQFSY</sequence>
<accession>Q4PR50</accession>
<accession>Q8LMP7</accession>
<accession>Q946I6</accession>
<dbReference type="EMBL" id="AF394551">
    <property type="protein sequence ID" value="AAL24487.1"/>
    <property type="molecule type" value="Genomic_DNA"/>
</dbReference>
<dbReference type="EMBL" id="AC105730">
    <property type="protein sequence ID" value="AAM51842.1"/>
    <property type="status" value="ALT_INIT"/>
    <property type="molecule type" value="Genomic_DNA"/>
</dbReference>
<dbReference type="EMBL" id="DP000009">
    <property type="protein sequence ID" value="ABF94053.1"/>
    <property type="status" value="ALT_INIT"/>
    <property type="molecule type" value="Genomic_DNA"/>
</dbReference>
<dbReference type="EMBL" id="AP014959">
    <property type="status" value="NOT_ANNOTATED_CDS"/>
    <property type="molecule type" value="Genomic_DNA"/>
</dbReference>
<dbReference type="EMBL" id="DQ061057">
    <property type="protein sequence ID" value="AAY63548.1"/>
    <property type="molecule type" value="mRNA"/>
</dbReference>
<dbReference type="RefSeq" id="XP_015629199.1">
    <property type="nucleotide sequence ID" value="XM_015773713.1"/>
</dbReference>
<dbReference type="RefSeq" id="XP_015629200.1">
    <property type="nucleotide sequence ID" value="XM_015773714.1"/>
</dbReference>
<dbReference type="RefSeq" id="XP_015629201.1">
    <property type="nucleotide sequence ID" value="XM_015773715.1"/>
</dbReference>
<dbReference type="SMR" id="Q4PR50"/>
<dbReference type="FunCoup" id="Q4PR50">
    <property type="interactions" value="12"/>
</dbReference>
<dbReference type="STRING" id="39947.Q4PR50"/>
<dbReference type="PaxDb" id="39947-Q4PR50"/>
<dbReference type="eggNOG" id="ENOG502QVVV">
    <property type="taxonomic scope" value="Eukaryota"/>
</dbReference>
<dbReference type="HOGENOM" id="CLU_027462_0_3_1"/>
<dbReference type="InParanoid" id="Q4PR50"/>
<dbReference type="OrthoDB" id="5823761at2759"/>
<dbReference type="Proteomes" id="UP000000763">
    <property type="component" value="Chromosome 3"/>
</dbReference>
<dbReference type="Proteomes" id="UP000059680">
    <property type="component" value="Chromosome 3"/>
</dbReference>
<dbReference type="GO" id="GO:0005576">
    <property type="term" value="C:extracellular region"/>
    <property type="evidence" value="ECO:0007669"/>
    <property type="project" value="UniProtKB-KW"/>
</dbReference>
<dbReference type="GO" id="GO:0016020">
    <property type="term" value="C:membrane"/>
    <property type="evidence" value="ECO:0007669"/>
    <property type="project" value="UniProtKB-SubCell"/>
</dbReference>
<dbReference type="GO" id="GO:0009828">
    <property type="term" value="P:plant-type cell wall loosening"/>
    <property type="evidence" value="ECO:0000250"/>
    <property type="project" value="UniProtKB"/>
</dbReference>
<dbReference type="CDD" id="cd22274">
    <property type="entry name" value="DPBB_EXPA_N"/>
    <property type="match status" value="1"/>
</dbReference>
<dbReference type="FunFam" id="2.40.40.10:FF:000001">
    <property type="entry name" value="Expansin"/>
    <property type="match status" value="1"/>
</dbReference>
<dbReference type="Gene3D" id="2.60.40.760">
    <property type="entry name" value="Expansin, cellulose-binding-like domain"/>
    <property type="match status" value="1"/>
</dbReference>
<dbReference type="Gene3D" id="2.40.40.10">
    <property type="entry name" value="RlpA-like domain"/>
    <property type="match status" value="1"/>
</dbReference>
<dbReference type="InterPro" id="IPR007118">
    <property type="entry name" value="Expan_Lol_pI"/>
</dbReference>
<dbReference type="InterPro" id="IPR002963">
    <property type="entry name" value="Expansin"/>
</dbReference>
<dbReference type="InterPro" id="IPR007112">
    <property type="entry name" value="Expansin/allergen_DPBB_dom"/>
</dbReference>
<dbReference type="InterPro" id="IPR007117">
    <property type="entry name" value="Expansin_CBD"/>
</dbReference>
<dbReference type="InterPro" id="IPR036749">
    <property type="entry name" value="Expansin_CBD_sf"/>
</dbReference>
<dbReference type="InterPro" id="IPR009009">
    <property type="entry name" value="RlpA-like_DPBB"/>
</dbReference>
<dbReference type="InterPro" id="IPR036908">
    <property type="entry name" value="RlpA-like_sf"/>
</dbReference>
<dbReference type="PANTHER" id="PTHR31867">
    <property type="entry name" value="EXPANSIN-A15"/>
    <property type="match status" value="1"/>
</dbReference>
<dbReference type="Pfam" id="PF03330">
    <property type="entry name" value="DPBB_1"/>
    <property type="match status" value="1"/>
</dbReference>
<dbReference type="Pfam" id="PF01357">
    <property type="entry name" value="Expansin_C"/>
    <property type="match status" value="1"/>
</dbReference>
<dbReference type="PRINTS" id="PR01226">
    <property type="entry name" value="EXPANSIN"/>
</dbReference>
<dbReference type="PRINTS" id="PR01225">
    <property type="entry name" value="EXPANSNFAMLY"/>
</dbReference>
<dbReference type="SMART" id="SM00837">
    <property type="entry name" value="DPBB_1"/>
    <property type="match status" value="1"/>
</dbReference>
<dbReference type="SUPFAM" id="SSF50685">
    <property type="entry name" value="Barwin-like endoglucanases"/>
    <property type="match status" value="1"/>
</dbReference>
<dbReference type="SUPFAM" id="SSF49590">
    <property type="entry name" value="PHL pollen allergen"/>
    <property type="match status" value="1"/>
</dbReference>
<dbReference type="PROSITE" id="PS50843">
    <property type="entry name" value="EXPANSIN_CBD"/>
    <property type="match status" value="1"/>
</dbReference>
<dbReference type="PROSITE" id="PS50842">
    <property type="entry name" value="EXPANSIN_EG45"/>
    <property type="match status" value="1"/>
</dbReference>
<feature type="signal peptide" evidence="2">
    <location>
        <begin position="1"/>
        <end position="30"/>
    </location>
</feature>
<feature type="chain" id="PRO_0000251994" description="Expansin-A15">
    <location>
        <begin position="31"/>
        <end position="260"/>
    </location>
</feature>
<feature type="domain" description="Expansin-like EG45" evidence="4">
    <location>
        <begin position="50"/>
        <end position="165"/>
    </location>
</feature>
<feature type="domain" description="Expansin-like CBD" evidence="3">
    <location>
        <begin position="175"/>
        <end position="254"/>
    </location>
</feature>
<proteinExistence type="evidence at transcript level"/>
<evidence type="ECO:0000250" key="1"/>
<evidence type="ECO:0000255" key="2"/>
<evidence type="ECO:0000255" key="3">
    <source>
        <dbReference type="PROSITE-ProRule" id="PRU00078"/>
    </source>
</evidence>
<evidence type="ECO:0000255" key="4">
    <source>
        <dbReference type="PROSITE-ProRule" id="PRU00079"/>
    </source>
</evidence>
<evidence type="ECO:0000269" key="5">
    <source>
    </source>
</evidence>
<evidence type="ECO:0000305" key="6"/>